<proteinExistence type="inferred from homology"/>
<sequence>MLKAVLEPAIGSKSKRDLKDYLPTLRNINKLERWALLLADEDFSKETQKLKYELKSGNSLENILERAFTLSREAARRRLKERPYDVQIIAGLALHEGKIIEMKTGEGKTLSSVQAAYLNSLTGDGVIIVTVNDYLAERDSNWMKPVFDLLGVTVGVVLSNMDYERRKDQYAKDITYVTNNELGFDYLRDNMRYDLNEKCLRKFNYCIIDEIDSILIDEARTPLIISGPTEGNTNAYLEVNSLVSFLKECSKDSKSGDYPLEIDDLDGDYTIDEKAKRISFTAKGLNNLEQLLVSKGIISGSLYTDSNFNYVHYMTQALKAHLLFFKNREYIVGDSGVEIVDEFTGRVLTGRRYSDGLHQAIEAKEEVRVANENKTMATITFQNLFRMFDKISGMTGTADTEAKEFHKIYNLDVVVVPTNRLLARIDEEDTIYYTEEFKFHAITDEVYKTYKKGQPVLVGTASIEKSEILSAMFKNRGIKHEVLNAKNHSREAFIIAEAGAKHAVTIATNMAGRGTDIKLGGNIEHRVRKKIGTNVSLEEFQEAVKNERENYLKDYNEVKSLGGLYVIGSERHESRRIDNQLRGRSGRQGDPGRSRFYVSLEDDLMRLFAGDSLRSLMGKLGMATGEPITHSLLTKSLINAQKRVEDRNFEIRKHLLEYDDVITKQRDFIYAQRNSILEDTAIKDRILIALEEYLSFLLEGTKGGSVSSVFLNEINLIFAYMLESLGSIENINSLDLKAKLMQIARANLDEKENLIGRDLFNGFLRYEYLKNIDFKFQEHLANLDSLREAVYLRSYANKNPITEYKEEGFLIFSELIKDIKVSTIRRVLQLKLDSNSSDFKSVKKSKNVNSIHKELSGILINENKNVSNVQVVRSSPKIGRNEPCYCGSGKKYKNCHGKS</sequence>
<reference key="1">
    <citation type="journal article" date="2004" name="Nucleic Acids Res.">
        <title>Comparative analysis of the Borrelia garinii genome.</title>
        <authorList>
            <person name="Gloeckner G."/>
            <person name="Lehmann R."/>
            <person name="Romualdi A."/>
            <person name="Pradella S."/>
            <person name="Schulte-Spechtel U."/>
            <person name="Schilhabel M."/>
            <person name="Wilske B."/>
            <person name="Suehnel J."/>
            <person name="Platzer M."/>
        </authorList>
    </citation>
    <scope>NUCLEOTIDE SEQUENCE [LARGE SCALE GENOMIC DNA]</scope>
    <source>
        <strain>ATCC BAA-2496 / DSM 23469 / PBi</strain>
    </source>
</reference>
<organism>
    <name type="scientific">Borrelia garinii subsp. bavariensis (strain ATCC BAA-2496 / DSM 23469 / PBi)</name>
    <name type="common">Borreliella bavariensis</name>
    <dbReference type="NCBI Taxonomy" id="290434"/>
    <lineage>
        <taxon>Bacteria</taxon>
        <taxon>Pseudomonadati</taxon>
        <taxon>Spirochaetota</taxon>
        <taxon>Spirochaetia</taxon>
        <taxon>Spirochaetales</taxon>
        <taxon>Borreliaceae</taxon>
        <taxon>Borreliella</taxon>
    </lineage>
</organism>
<comment type="function">
    <text evidence="1">Part of the Sec protein translocase complex. Interacts with the SecYEG preprotein conducting channel. Has a central role in coupling the hydrolysis of ATP to the transfer of proteins into and across the cell membrane, serving as an ATP-driven molecular motor driving the stepwise translocation of polypeptide chains across the membrane.</text>
</comment>
<comment type="catalytic activity">
    <reaction evidence="1">
        <text>ATP + H2O + cellular proteinSide 1 = ADP + phosphate + cellular proteinSide 2.</text>
        <dbReference type="EC" id="7.4.2.8"/>
    </reaction>
</comment>
<comment type="cofactor">
    <cofactor evidence="1">
        <name>Zn(2+)</name>
        <dbReference type="ChEBI" id="CHEBI:29105"/>
    </cofactor>
    <text evidence="1">May bind 1 zinc ion per subunit.</text>
</comment>
<comment type="subunit">
    <text evidence="1">Monomer and homodimer. Part of the essential Sec protein translocation apparatus which comprises SecA, SecYEG and auxiliary proteins SecDF. Other proteins may also be involved.</text>
</comment>
<comment type="subcellular location">
    <subcellularLocation>
        <location evidence="1">Cell inner membrane</location>
        <topology evidence="1">Peripheral membrane protein</topology>
        <orientation evidence="1">Cytoplasmic side</orientation>
    </subcellularLocation>
    <subcellularLocation>
        <location evidence="1">Cytoplasm</location>
    </subcellularLocation>
    <text evidence="1">Distribution is 50-50.</text>
</comment>
<comment type="similarity">
    <text evidence="1">Belongs to the SecA family.</text>
</comment>
<keyword id="KW-0067">ATP-binding</keyword>
<keyword id="KW-0997">Cell inner membrane</keyword>
<keyword id="KW-1003">Cell membrane</keyword>
<keyword id="KW-0963">Cytoplasm</keyword>
<keyword id="KW-0472">Membrane</keyword>
<keyword id="KW-0479">Metal-binding</keyword>
<keyword id="KW-0547">Nucleotide-binding</keyword>
<keyword id="KW-0653">Protein transport</keyword>
<keyword id="KW-1278">Translocase</keyword>
<keyword id="KW-0811">Translocation</keyword>
<keyword id="KW-0813">Transport</keyword>
<keyword id="KW-0862">Zinc</keyword>
<feature type="chain" id="PRO_0000320743" description="Protein translocase subunit SecA">
    <location>
        <begin position="1"/>
        <end position="899"/>
    </location>
</feature>
<feature type="binding site" evidence="1">
    <location>
        <position position="87"/>
    </location>
    <ligand>
        <name>ATP</name>
        <dbReference type="ChEBI" id="CHEBI:30616"/>
    </ligand>
</feature>
<feature type="binding site" evidence="1">
    <location>
        <begin position="105"/>
        <end position="109"/>
    </location>
    <ligand>
        <name>ATP</name>
        <dbReference type="ChEBI" id="CHEBI:30616"/>
    </ligand>
</feature>
<feature type="binding site" evidence="1">
    <location>
        <position position="516"/>
    </location>
    <ligand>
        <name>ATP</name>
        <dbReference type="ChEBI" id="CHEBI:30616"/>
    </ligand>
</feature>
<feature type="binding site" evidence="1">
    <location>
        <position position="884"/>
    </location>
    <ligand>
        <name>Zn(2+)</name>
        <dbReference type="ChEBI" id="CHEBI:29105"/>
    </ligand>
</feature>
<feature type="binding site" evidence="1">
    <location>
        <position position="886"/>
    </location>
    <ligand>
        <name>Zn(2+)</name>
        <dbReference type="ChEBI" id="CHEBI:29105"/>
    </ligand>
</feature>
<feature type="binding site" evidence="1">
    <location>
        <position position="895"/>
    </location>
    <ligand>
        <name>Zn(2+)</name>
        <dbReference type="ChEBI" id="CHEBI:29105"/>
    </ligand>
</feature>
<feature type="binding site" evidence="1">
    <location>
        <position position="896"/>
    </location>
    <ligand>
        <name>Zn(2+)</name>
        <dbReference type="ChEBI" id="CHEBI:29105"/>
    </ligand>
</feature>
<gene>
    <name evidence="1" type="primary">secA</name>
    <name type="ordered locus">BG0152</name>
</gene>
<name>SECA_BORGP</name>
<evidence type="ECO:0000255" key="1">
    <source>
        <dbReference type="HAMAP-Rule" id="MF_01382"/>
    </source>
</evidence>
<dbReference type="EC" id="7.4.2.8" evidence="1"/>
<dbReference type="EMBL" id="CP000013">
    <property type="protein sequence ID" value="AAU07010.1"/>
    <property type="molecule type" value="Genomic_DNA"/>
</dbReference>
<dbReference type="RefSeq" id="WP_011193503.1">
    <property type="nucleotide sequence ID" value="NC_006156.1"/>
</dbReference>
<dbReference type="SMR" id="Q662L1"/>
<dbReference type="GeneID" id="45160947"/>
<dbReference type="KEGG" id="bga:BG0152"/>
<dbReference type="eggNOG" id="COG0653">
    <property type="taxonomic scope" value="Bacteria"/>
</dbReference>
<dbReference type="HOGENOM" id="CLU_005314_3_0_12"/>
<dbReference type="OrthoDB" id="9805579at2"/>
<dbReference type="Proteomes" id="UP000002276">
    <property type="component" value="Chromosome"/>
</dbReference>
<dbReference type="GO" id="GO:0031522">
    <property type="term" value="C:cell envelope Sec protein transport complex"/>
    <property type="evidence" value="ECO:0007669"/>
    <property type="project" value="TreeGrafter"/>
</dbReference>
<dbReference type="GO" id="GO:0005829">
    <property type="term" value="C:cytosol"/>
    <property type="evidence" value="ECO:0007669"/>
    <property type="project" value="TreeGrafter"/>
</dbReference>
<dbReference type="GO" id="GO:0005886">
    <property type="term" value="C:plasma membrane"/>
    <property type="evidence" value="ECO:0007669"/>
    <property type="project" value="UniProtKB-SubCell"/>
</dbReference>
<dbReference type="GO" id="GO:0005524">
    <property type="term" value="F:ATP binding"/>
    <property type="evidence" value="ECO:0007669"/>
    <property type="project" value="UniProtKB-UniRule"/>
</dbReference>
<dbReference type="GO" id="GO:0046872">
    <property type="term" value="F:metal ion binding"/>
    <property type="evidence" value="ECO:0007669"/>
    <property type="project" value="UniProtKB-KW"/>
</dbReference>
<dbReference type="GO" id="GO:0008564">
    <property type="term" value="F:protein-exporting ATPase activity"/>
    <property type="evidence" value="ECO:0007669"/>
    <property type="project" value="UniProtKB-EC"/>
</dbReference>
<dbReference type="GO" id="GO:0065002">
    <property type="term" value="P:intracellular protein transmembrane transport"/>
    <property type="evidence" value="ECO:0007669"/>
    <property type="project" value="UniProtKB-UniRule"/>
</dbReference>
<dbReference type="GO" id="GO:0017038">
    <property type="term" value="P:protein import"/>
    <property type="evidence" value="ECO:0007669"/>
    <property type="project" value="InterPro"/>
</dbReference>
<dbReference type="GO" id="GO:0006605">
    <property type="term" value="P:protein targeting"/>
    <property type="evidence" value="ECO:0007669"/>
    <property type="project" value="UniProtKB-UniRule"/>
</dbReference>
<dbReference type="GO" id="GO:0043952">
    <property type="term" value="P:protein transport by the Sec complex"/>
    <property type="evidence" value="ECO:0007669"/>
    <property type="project" value="TreeGrafter"/>
</dbReference>
<dbReference type="CDD" id="cd17928">
    <property type="entry name" value="DEXDc_SecA"/>
    <property type="match status" value="1"/>
</dbReference>
<dbReference type="CDD" id="cd18803">
    <property type="entry name" value="SF2_C_secA"/>
    <property type="match status" value="1"/>
</dbReference>
<dbReference type="FunFam" id="3.40.50.300:FF:000113">
    <property type="entry name" value="Preprotein translocase subunit SecA"/>
    <property type="match status" value="1"/>
</dbReference>
<dbReference type="Gene3D" id="1.10.3060.10">
    <property type="entry name" value="Helical scaffold and wing domains of SecA"/>
    <property type="match status" value="1"/>
</dbReference>
<dbReference type="Gene3D" id="3.40.50.300">
    <property type="entry name" value="P-loop containing nucleotide triphosphate hydrolases"/>
    <property type="match status" value="2"/>
</dbReference>
<dbReference type="Gene3D" id="3.90.1440.10">
    <property type="entry name" value="SecA, preprotein cross-linking domain"/>
    <property type="match status" value="1"/>
</dbReference>
<dbReference type="HAMAP" id="MF_01382">
    <property type="entry name" value="SecA"/>
    <property type="match status" value="1"/>
</dbReference>
<dbReference type="InterPro" id="IPR014001">
    <property type="entry name" value="Helicase_ATP-bd"/>
</dbReference>
<dbReference type="InterPro" id="IPR001650">
    <property type="entry name" value="Helicase_C-like"/>
</dbReference>
<dbReference type="InterPro" id="IPR027417">
    <property type="entry name" value="P-loop_NTPase"/>
</dbReference>
<dbReference type="InterPro" id="IPR004027">
    <property type="entry name" value="SEC_C_motif"/>
</dbReference>
<dbReference type="InterPro" id="IPR000185">
    <property type="entry name" value="SecA"/>
</dbReference>
<dbReference type="InterPro" id="IPR020937">
    <property type="entry name" value="SecA_CS"/>
</dbReference>
<dbReference type="InterPro" id="IPR011115">
    <property type="entry name" value="SecA_DEAD"/>
</dbReference>
<dbReference type="InterPro" id="IPR014018">
    <property type="entry name" value="SecA_motor_DEAD"/>
</dbReference>
<dbReference type="InterPro" id="IPR011130">
    <property type="entry name" value="SecA_preprotein_X-link_dom"/>
</dbReference>
<dbReference type="InterPro" id="IPR044722">
    <property type="entry name" value="SecA_SF2_C"/>
</dbReference>
<dbReference type="InterPro" id="IPR011116">
    <property type="entry name" value="SecA_Wing/Scaffold"/>
</dbReference>
<dbReference type="InterPro" id="IPR036266">
    <property type="entry name" value="SecA_Wing/Scaffold_sf"/>
</dbReference>
<dbReference type="InterPro" id="IPR036670">
    <property type="entry name" value="SecA_X-link_sf"/>
</dbReference>
<dbReference type="NCBIfam" id="NF009538">
    <property type="entry name" value="PRK12904.1"/>
    <property type="match status" value="1"/>
</dbReference>
<dbReference type="NCBIfam" id="TIGR00963">
    <property type="entry name" value="secA"/>
    <property type="match status" value="1"/>
</dbReference>
<dbReference type="PANTHER" id="PTHR30612:SF0">
    <property type="entry name" value="CHLOROPLAST PROTEIN-TRANSPORTING ATPASE"/>
    <property type="match status" value="1"/>
</dbReference>
<dbReference type="PANTHER" id="PTHR30612">
    <property type="entry name" value="SECA INNER MEMBRANE COMPONENT OF SEC PROTEIN SECRETION SYSTEM"/>
    <property type="match status" value="1"/>
</dbReference>
<dbReference type="Pfam" id="PF21090">
    <property type="entry name" value="P-loop_SecA"/>
    <property type="match status" value="1"/>
</dbReference>
<dbReference type="Pfam" id="PF02810">
    <property type="entry name" value="SEC-C"/>
    <property type="match status" value="1"/>
</dbReference>
<dbReference type="Pfam" id="PF07517">
    <property type="entry name" value="SecA_DEAD"/>
    <property type="match status" value="1"/>
</dbReference>
<dbReference type="Pfam" id="PF01043">
    <property type="entry name" value="SecA_PP_bind"/>
    <property type="match status" value="1"/>
</dbReference>
<dbReference type="Pfam" id="PF07516">
    <property type="entry name" value="SecA_SW"/>
    <property type="match status" value="1"/>
</dbReference>
<dbReference type="PRINTS" id="PR00906">
    <property type="entry name" value="SECA"/>
</dbReference>
<dbReference type="SMART" id="SM00957">
    <property type="entry name" value="SecA_DEAD"/>
    <property type="match status" value="1"/>
</dbReference>
<dbReference type="SMART" id="SM00958">
    <property type="entry name" value="SecA_PP_bind"/>
    <property type="match status" value="1"/>
</dbReference>
<dbReference type="SUPFAM" id="SSF81886">
    <property type="entry name" value="Helical scaffold and wing domains of SecA"/>
    <property type="match status" value="1"/>
</dbReference>
<dbReference type="SUPFAM" id="SSF52540">
    <property type="entry name" value="P-loop containing nucleoside triphosphate hydrolases"/>
    <property type="match status" value="2"/>
</dbReference>
<dbReference type="SUPFAM" id="SSF81767">
    <property type="entry name" value="Pre-protein crosslinking domain of SecA"/>
    <property type="match status" value="1"/>
</dbReference>
<dbReference type="PROSITE" id="PS01312">
    <property type="entry name" value="SECA"/>
    <property type="match status" value="1"/>
</dbReference>
<dbReference type="PROSITE" id="PS51196">
    <property type="entry name" value="SECA_MOTOR_DEAD"/>
    <property type="match status" value="1"/>
</dbReference>
<protein>
    <recommendedName>
        <fullName evidence="1">Protein translocase subunit SecA</fullName>
        <ecNumber evidence="1">7.4.2.8</ecNumber>
    </recommendedName>
</protein>
<accession>Q662L1</accession>